<sequence>MARIAGVNIPNHKHTEIGLTAIYGVGRSRARKICEATGVPFDKKVKDLTDADLEKLRDEVGKVTVEGDLRRETTMNIKRLMDLGCYRGMRHRKGLPMRGQRTRTNARTRKGPRKAGVALKK</sequence>
<comment type="function">
    <text evidence="1">Located at the top of the head of the 30S subunit, it contacts several helices of the 16S rRNA. In the 70S ribosome it contacts the 23S rRNA (bridge B1a) and protein L5 of the 50S subunit (bridge B1b), connecting the 2 subunits; these bridges are implicated in subunit movement. Contacts the tRNAs in the A and P-sites.</text>
</comment>
<comment type="subunit">
    <text evidence="1">Part of the 30S ribosomal subunit. Forms a loose heterodimer with protein S19. Forms two bridges to the 50S subunit in the 70S ribosome.</text>
</comment>
<comment type="similarity">
    <text evidence="1">Belongs to the universal ribosomal protein uS13 family.</text>
</comment>
<dbReference type="EMBL" id="AM260479">
    <property type="protein sequence ID" value="CAJ94529.1"/>
    <property type="molecule type" value="Genomic_DNA"/>
</dbReference>
<dbReference type="RefSeq" id="WP_010812377.1">
    <property type="nucleotide sequence ID" value="NZ_CP039287.1"/>
</dbReference>
<dbReference type="SMR" id="Q0K642"/>
<dbReference type="STRING" id="381666.H16_A3461"/>
<dbReference type="GeneID" id="34308093"/>
<dbReference type="KEGG" id="reh:H16_A3461"/>
<dbReference type="eggNOG" id="COG0099">
    <property type="taxonomic scope" value="Bacteria"/>
</dbReference>
<dbReference type="HOGENOM" id="CLU_103849_1_2_4"/>
<dbReference type="OrthoDB" id="9803610at2"/>
<dbReference type="Proteomes" id="UP000008210">
    <property type="component" value="Chromosome 1"/>
</dbReference>
<dbReference type="GO" id="GO:0005829">
    <property type="term" value="C:cytosol"/>
    <property type="evidence" value="ECO:0007669"/>
    <property type="project" value="TreeGrafter"/>
</dbReference>
<dbReference type="GO" id="GO:0015935">
    <property type="term" value="C:small ribosomal subunit"/>
    <property type="evidence" value="ECO:0007669"/>
    <property type="project" value="TreeGrafter"/>
</dbReference>
<dbReference type="GO" id="GO:0019843">
    <property type="term" value="F:rRNA binding"/>
    <property type="evidence" value="ECO:0007669"/>
    <property type="project" value="UniProtKB-UniRule"/>
</dbReference>
<dbReference type="GO" id="GO:0003735">
    <property type="term" value="F:structural constituent of ribosome"/>
    <property type="evidence" value="ECO:0007669"/>
    <property type="project" value="InterPro"/>
</dbReference>
<dbReference type="GO" id="GO:0000049">
    <property type="term" value="F:tRNA binding"/>
    <property type="evidence" value="ECO:0007669"/>
    <property type="project" value="UniProtKB-UniRule"/>
</dbReference>
<dbReference type="GO" id="GO:0006412">
    <property type="term" value="P:translation"/>
    <property type="evidence" value="ECO:0007669"/>
    <property type="project" value="UniProtKB-UniRule"/>
</dbReference>
<dbReference type="FunFam" id="1.10.8.50:FF:000001">
    <property type="entry name" value="30S ribosomal protein S13"/>
    <property type="match status" value="1"/>
</dbReference>
<dbReference type="FunFam" id="4.10.910.10:FF:000001">
    <property type="entry name" value="30S ribosomal protein S13"/>
    <property type="match status" value="1"/>
</dbReference>
<dbReference type="Gene3D" id="1.10.8.50">
    <property type="match status" value="1"/>
</dbReference>
<dbReference type="Gene3D" id="4.10.910.10">
    <property type="entry name" value="30s ribosomal protein s13, domain 2"/>
    <property type="match status" value="1"/>
</dbReference>
<dbReference type="HAMAP" id="MF_01315">
    <property type="entry name" value="Ribosomal_uS13"/>
    <property type="match status" value="1"/>
</dbReference>
<dbReference type="InterPro" id="IPR027437">
    <property type="entry name" value="Rbsml_uS13_C"/>
</dbReference>
<dbReference type="InterPro" id="IPR001892">
    <property type="entry name" value="Ribosomal_uS13"/>
</dbReference>
<dbReference type="InterPro" id="IPR010979">
    <property type="entry name" value="Ribosomal_uS13-like_H2TH"/>
</dbReference>
<dbReference type="InterPro" id="IPR019980">
    <property type="entry name" value="Ribosomal_uS13_bac-type"/>
</dbReference>
<dbReference type="InterPro" id="IPR018269">
    <property type="entry name" value="Ribosomal_uS13_CS"/>
</dbReference>
<dbReference type="NCBIfam" id="TIGR03631">
    <property type="entry name" value="uS13_bact"/>
    <property type="match status" value="1"/>
</dbReference>
<dbReference type="PANTHER" id="PTHR10871">
    <property type="entry name" value="30S RIBOSOMAL PROTEIN S13/40S RIBOSOMAL PROTEIN S18"/>
    <property type="match status" value="1"/>
</dbReference>
<dbReference type="PANTHER" id="PTHR10871:SF1">
    <property type="entry name" value="SMALL RIBOSOMAL SUBUNIT PROTEIN US13M"/>
    <property type="match status" value="1"/>
</dbReference>
<dbReference type="Pfam" id="PF00416">
    <property type="entry name" value="Ribosomal_S13"/>
    <property type="match status" value="2"/>
</dbReference>
<dbReference type="PIRSF" id="PIRSF002134">
    <property type="entry name" value="Ribosomal_S13"/>
    <property type="match status" value="1"/>
</dbReference>
<dbReference type="SUPFAM" id="SSF46946">
    <property type="entry name" value="S13-like H2TH domain"/>
    <property type="match status" value="1"/>
</dbReference>
<dbReference type="PROSITE" id="PS00646">
    <property type="entry name" value="RIBOSOMAL_S13_1"/>
    <property type="match status" value="1"/>
</dbReference>
<dbReference type="PROSITE" id="PS50159">
    <property type="entry name" value="RIBOSOMAL_S13_2"/>
    <property type="match status" value="1"/>
</dbReference>
<keyword id="KW-1185">Reference proteome</keyword>
<keyword id="KW-0687">Ribonucleoprotein</keyword>
<keyword id="KW-0689">Ribosomal protein</keyword>
<keyword id="KW-0694">RNA-binding</keyword>
<keyword id="KW-0699">rRNA-binding</keyword>
<keyword id="KW-0820">tRNA-binding</keyword>
<evidence type="ECO:0000255" key="1">
    <source>
        <dbReference type="HAMAP-Rule" id="MF_01315"/>
    </source>
</evidence>
<evidence type="ECO:0000256" key="2">
    <source>
        <dbReference type="SAM" id="MobiDB-lite"/>
    </source>
</evidence>
<evidence type="ECO:0000305" key="3"/>
<protein>
    <recommendedName>
        <fullName evidence="1">Small ribosomal subunit protein uS13</fullName>
    </recommendedName>
    <alternativeName>
        <fullName evidence="3">30S ribosomal protein S13</fullName>
    </alternativeName>
</protein>
<accession>Q0K642</accession>
<name>RS13_CUPNH</name>
<organism>
    <name type="scientific">Cupriavidus necator (strain ATCC 17699 / DSM 428 / KCTC 22496 / NCIMB 10442 / H16 / Stanier 337)</name>
    <name type="common">Ralstonia eutropha</name>
    <dbReference type="NCBI Taxonomy" id="381666"/>
    <lineage>
        <taxon>Bacteria</taxon>
        <taxon>Pseudomonadati</taxon>
        <taxon>Pseudomonadota</taxon>
        <taxon>Betaproteobacteria</taxon>
        <taxon>Burkholderiales</taxon>
        <taxon>Burkholderiaceae</taxon>
        <taxon>Cupriavidus</taxon>
    </lineage>
</organism>
<feature type="chain" id="PRO_0000306685" description="Small ribosomal subunit protein uS13">
    <location>
        <begin position="1"/>
        <end position="121"/>
    </location>
</feature>
<feature type="region of interest" description="Disordered" evidence="2">
    <location>
        <begin position="91"/>
        <end position="121"/>
    </location>
</feature>
<reference key="1">
    <citation type="journal article" date="2006" name="Nat. Biotechnol.">
        <title>Genome sequence of the bioplastic-producing 'Knallgas' bacterium Ralstonia eutropha H16.</title>
        <authorList>
            <person name="Pohlmann A."/>
            <person name="Fricke W.F."/>
            <person name="Reinecke F."/>
            <person name="Kusian B."/>
            <person name="Liesegang H."/>
            <person name="Cramm R."/>
            <person name="Eitinger T."/>
            <person name="Ewering C."/>
            <person name="Poetter M."/>
            <person name="Schwartz E."/>
            <person name="Strittmatter A."/>
            <person name="Voss I."/>
            <person name="Gottschalk G."/>
            <person name="Steinbuechel A."/>
            <person name="Friedrich B."/>
            <person name="Bowien B."/>
        </authorList>
    </citation>
    <scope>NUCLEOTIDE SEQUENCE [LARGE SCALE GENOMIC DNA]</scope>
    <source>
        <strain>ATCC 17699 / DSM 428 / KCTC 22496 / NCIMB 10442 / H16 / Stanier 337</strain>
    </source>
</reference>
<proteinExistence type="inferred from homology"/>
<gene>
    <name evidence="1" type="primary">rpsM</name>
    <name type="ordered locus">H16_A3461</name>
</gene>